<name>MYO15_MOUSE</name>
<keyword id="KW-0002">3D-structure</keyword>
<keyword id="KW-0009">Actin-binding</keyword>
<keyword id="KW-0025">Alternative splicing</keyword>
<keyword id="KW-0067">ATP-binding</keyword>
<keyword id="KW-0966">Cell projection</keyword>
<keyword id="KW-0175">Coiled coil</keyword>
<keyword id="KW-0963">Cytoplasm</keyword>
<keyword id="KW-0206">Cytoskeleton</keyword>
<keyword id="KW-0209">Deafness</keyword>
<keyword id="KW-0225">Disease variant</keyword>
<keyword id="KW-1009">Hearing</keyword>
<keyword id="KW-0505">Motor protein</keyword>
<keyword id="KW-0518">Myosin</keyword>
<keyword id="KW-0547">Nucleotide-binding</keyword>
<keyword id="KW-1185">Reference proteome</keyword>
<keyword id="KW-0677">Repeat</keyword>
<keyword id="KW-0728">SH3 domain</keyword>
<dbReference type="EMBL" id="AF144095">
    <property type="protein sequence ID" value="AAF05904.1"/>
    <property type="molecule type" value="mRNA"/>
</dbReference>
<dbReference type="EMBL" id="AY331132">
    <property type="protein sequence ID" value="AAP88402.1"/>
    <property type="molecule type" value="mRNA"/>
</dbReference>
<dbReference type="EMBL" id="AY331133">
    <property type="protein sequence ID" value="AAP88403.1"/>
    <property type="molecule type" value="mRNA"/>
</dbReference>
<dbReference type="EMBL" id="AL596090">
    <property type="status" value="NOT_ANNOTATED_CDS"/>
    <property type="molecule type" value="Genomic_DNA"/>
</dbReference>
<dbReference type="EMBL" id="AL596386">
    <property type="status" value="NOT_ANNOTATED_CDS"/>
    <property type="molecule type" value="Genomic_DNA"/>
</dbReference>
<dbReference type="EMBL" id="AF053130">
    <property type="protein sequence ID" value="AAC40124.1"/>
    <property type="molecule type" value="mRNA"/>
</dbReference>
<dbReference type="EMBL" id="AB014510">
    <property type="protein sequence ID" value="BAA36582.1"/>
    <property type="molecule type" value="mRNA"/>
</dbReference>
<dbReference type="CCDS" id="CCDS24792.1">
    <molecule id="Q9QZZ4-1"/>
</dbReference>
<dbReference type="CCDS" id="CCDS24793.1">
    <molecule id="Q9QZZ4-3"/>
</dbReference>
<dbReference type="CCDS" id="CCDS48811.1">
    <molecule id="Q9QZZ4-2"/>
</dbReference>
<dbReference type="PIR" id="A59295">
    <property type="entry name" value="A59295"/>
</dbReference>
<dbReference type="PIR" id="T42386">
    <property type="entry name" value="T42386"/>
</dbReference>
<dbReference type="RefSeq" id="NP_001096641.1">
    <molecule id="Q9QZZ4-2"/>
    <property type="nucleotide sequence ID" value="NM_001103171.1"/>
</dbReference>
<dbReference type="RefSeq" id="NP_034992.2">
    <molecule id="Q9QZZ4-1"/>
    <property type="nucleotide sequence ID" value="NM_010862.2"/>
</dbReference>
<dbReference type="RefSeq" id="NP_874357.2">
    <molecule id="Q9QZZ4-3"/>
    <property type="nucleotide sequence ID" value="NM_182698.2"/>
</dbReference>
<dbReference type="RefSeq" id="XP_017169821.1">
    <property type="nucleotide sequence ID" value="XM_017314332.1"/>
</dbReference>
<dbReference type="RefSeq" id="XP_017169822.1">
    <property type="nucleotide sequence ID" value="XM_017314333.1"/>
</dbReference>
<dbReference type="PDB" id="6Y38">
    <property type="method" value="X-ray"/>
    <property type="resolution" value="1.70 A"/>
    <property type="chains" value="C/D=3499-3511"/>
</dbReference>
<dbReference type="PDB" id="6Y9N">
    <property type="method" value="X-ray"/>
    <property type="resolution" value="1.93 A"/>
    <property type="chains" value="B=3499-3511"/>
</dbReference>
<dbReference type="PDB" id="7R91">
    <property type="method" value="EM"/>
    <property type="resolution" value="2.83 A"/>
    <property type="chains" value="D=1205-1889"/>
</dbReference>
<dbReference type="PDB" id="7RB8">
    <property type="method" value="EM"/>
    <property type="resolution" value="3.63 A"/>
    <property type="chains" value="D=1205-1889"/>
</dbReference>
<dbReference type="PDB" id="7RB9">
    <property type="method" value="EM"/>
    <property type="resolution" value="3.76 A"/>
    <property type="chains" value="D=1205-1889"/>
</dbReference>
<dbReference type="PDB" id="7UDT">
    <property type="method" value="EM"/>
    <property type="resolution" value="3.17 A"/>
    <property type="chains" value="D=1205-1923"/>
</dbReference>
<dbReference type="PDB" id="7UDU">
    <property type="method" value="EM"/>
    <property type="resolution" value="4.15 A"/>
    <property type="chains" value="D=1205-1923"/>
</dbReference>
<dbReference type="PDBsum" id="6Y38"/>
<dbReference type="PDBsum" id="6Y9N"/>
<dbReference type="PDBsum" id="7R91"/>
<dbReference type="PDBsum" id="7RB8"/>
<dbReference type="PDBsum" id="7RB9"/>
<dbReference type="PDBsum" id="7UDT"/>
<dbReference type="PDBsum" id="7UDU"/>
<dbReference type="EMDB" id="EMD-24322"/>
<dbReference type="EMDB" id="EMD-24399"/>
<dbReference type="EMDB" id="EMD-24400"/>
<dbReference type="EMDB" id="EMD-26459"/>
<dbReference type="EMDB" id="EMD-26460"/>
<dbReference type="SMR" id="Q9QZZ4"/>
<dbReference type="BioGRID" id="201662">
    <property type="interactions" value="4"/>
</dbReference>
<dbReference type="CORUM" id="Q9QZZ4"/>
<dbReference type="FunCoup" id="Q9QZZ4">
    <property type="interactions" value="141"/>
</dbReference>
<dbReference type="IntAct" id="Q9QZZ4">
    <property type="interactions" value="4"/>
</dbReference>
<dbReference type="MINT" id="Q9QZZ4"/>
<dbReference type="STRING" id="10090.ENSMUSP00000071777"/>
<dbReference type="GlyGen" id="Q9QZZ4">
    <property type="glycosylation" value="2 sites"/>
</dbReference>
<dbReference type="iPTMnet" id="Q9QZZ4"/>
<dbReference type="PhosphoSitePlus" id="Q9QZZ4"/>
<dbReference type="SwissPalm" id="Q9QZZ4"/>
<dbReference type="jPOST" id="Q9QZZ4"/>
<dbReference type="PaxDb" id="10090-ENSMUSP00000071777"/>
<dbReference type="Antibodypedia" id="58384">
    <property type="antibodies" value="32 antibodies from 12 providers"/>
</dbReference>
<dbReference type="DNASU" id="17910"/>
<dbReference type="Ensembl" id="ENSMUST00000071880.9">
    <molecule id="Q9QZZ4-1"/>
    <property type="protein sequence ID" value="ENSMUSP00000071777.3"/>
    <property type="gene ID" value="ENSMUSG00000042678.18"/>
</dbReference>
<dbReference type="Ensembl" id="ENSMUST00000081823.12">
    <molecule id="Q9QZZ4-3"/>
    <property type="protein sequence ID" value="ENSMUSP00000080507.6"/>
    <property type="gene ID" value="ENSMUSG00000042678.18"/>
</dbReference>
<dbReference type="Ensembl" id="ENSMUST00000094135.9">
    <molecule id="Q9QZZ4-2"/>
    <property type="protein sequence ID" value="ENSMUSP00000091686.3"/>
    <property type="gene ID" value="ENSMUSG00000042678.18"/>
</dbReference>
<dbReference type="GeneID" id="17910"/>
<dbReference type="KEGG" id="mmu:17910"/>
<dbReference type="UCSC" id="uc007jfz.1">
    <molecule id="Q9QZZ4-1"/>
    <property type="organism name" value="mouse"/>
</dbReference>
<dbReference type="UCSC" id="uc007jga.1">
    <molecule id="Q9QZZ4-3"/>
    <property type="organism name" value="mouse"/>
</dbReference>
<dbReference type="UCSC" id="uc007jgb.2">
    <molecule id="Q9QZZ4-2"/>
    <property type="organism name" value="mouse"/>
</dbReference>
<dbReference type="AGR" id="MGI:1261811"/>
<dbReference type="CTD" id="51168"/>
<dbReference type="MGI" id="MGI:1261811">
    <property type="gene designation" value="Myo15a"/>
</dbReference>
<dbReference type="VEuPathDB" id="HostDB:ENSMUSG00000042678"/>
<dbReference type="eggNOG" id="KOG4229">
    <property type="taxonomic scope" value="Eukaryota"/>
</dbReference>
<dbReference type="GeneTree" id="ENSGT00940000155335"/>
<dbReference type="InParanoid" id="Q9QZZ4"/>
<dbReference type="OMA" id="NGHGEMI"/>
<dbReference type="OrthoDB" id="8182952at2759"/>
<dbReference type="PhylomeDB" id="Q9QZZ4"/>
<dbReference type="TreeFam" id="TF316834"/>
<dbReference type="BioGRID-ORCS" id="17910">
    <property type="hits" value="5 hits in 77 CRISPR screens"/>
</dbReference>
<dbReference type="ChiTaRS" id="Myo15">
    <property type="organism name" value="mouse"/>
</dbReference>
<dbReference type="PRO" id="PR:Q9QZZ4"/>
<dbReference type="Proteomes" id="UP000000589">
    <property type="component" value="Chromosome 11"/>
</dbReference>
<dbReference type="RNAct" id="Q9QZZ4">
    <property type="molecule type" value="protein"/>
</dbReference>
<dbReference type="Bgee" id="ENSMUSG00000042678">
    <property type="expression patterns" value="Expressed in epithelium of saccule and 24 other cell types or tissues"/>
</dbReference>
<dbReference type="ExpressionAtlas" id="Q9QZZ4">
    <property type="expression patterns" value="baseline and differential"/>
</dbReference>
<dbReference type="GO" id="GO:0005829">
    <property type="term" value="C:cytosol"/>
    <property type="evidence" value="ECO:0000304"/>
    <property type="project" value="Reactome"/>
</dbReference>
<dbReference type="GO" id="GO:0016459">
    <property type="term" value="C:myosin complex"/>
    <property type="evidence" value="ECO:0007669"/>
    <property type="project" value="UniProtKB-KW"/>
</dbReference>
<dbReference type="GO" id="GO:0032420">
    <property type="term" value="C:stereocilium"/>
    <property type="evidence" value="ECO:0000314"/>
    <property type="project" value="MGI"/>
</dbReference>
<dbReference type="GO" id="GO:0032421">
    <property type="term" value="C:stereocilium bundle"/>
    <property type="evidence" value="ECO:0000314"/>
    <property type="project" value="MGI"/>
</dbReference>
<dbReference type="GO" id="GO:0003779">
    <property type="term" value="F:actin binding"/>
    <property type="evidence" value="ECO:0007669"/>
    <property type="project" value="UniProtKB-KW"/>
</dbReference>
<dbReference type="GO" id="GO:0005524">
    <property type="term" value="F:ATP binding"/>
    <property type="evidence" value="ECO:0007669"/>
    <property type="project" value="UniProtKB-KW"/>
</dbReference>
<dbReference type="GO" id="GO:0003774">
    <property type="term" value="F:cytoskeletal motor activity"/>
    <property type="evidence" value="ECO:0007669"/>
    <property type="project" value="InterPro"/>
</dbReference>
<dbReference type="GO" id="GO:0042472">
    <property type="term" value="P:inner ear morphogenesis"/>
    <property type="evidence" value="ECO:0000315"/>
    <property type="project" value="MGI"/>
</dbReference>
<dbReference type="GO" id="GO:0007626">
    <property type="term" value="P:locomotory behavior"/>
    <property type="evidence" value="ECO:0000315"/>
    <property type="project" value="MGI"/>
</dbReference>
<dbReference type="GO" id="GO:0009416">
    <property type="term" value="P:response to light stimulus"/>
    <property type="evidence" value="ECO:0007669"/>
    <property type="project" value="Ensembl"/>
</dbReference>
<dbReference type="GO" id="GO:0007605">
    <property type="term" value="P:sensory perception of sound"/>
    <property type="evidence" value="ECO:0000315"/>
    <property type="project" value="MGI"/>
</dbReference>
<dbReference type="CDD" id="cd14473">
    <property type="entry name" value="FERM_B-lobe"/>
    <property type="match status" value="1"/>
</dbReference>
<dbReference type="CDD" id="cd13201">
    <property type="entry name" value="FERM_C_MyoXV"/>
    <property type="match status" value="1"/>
</dbReference>
<dbReference type="CDD" id="cd01387">
    <property type="entry name" value="MYSc_Myo15"/>
    <property type="match status" value="1"/>
</dbReference>
<dbReference type="FunFam" id="1.10.10.820:FF:000001">
    <property type="entry name" value="Myosin heavy chain"/>
    <property type="match status" value="1"/>
</dbReference>
<dbReference type="FunFam" id="1.25.40.530:FF:000009">
    <property type="entry name" value="Myosin XVA"/>
    <property type="match status" value="1"/>
</dbReference>
<dbReference type="FunFam" id="2.30.30.40:FF:000201">
    <property type="entry name" value="Myosin XVA"/>
    <property type="match status" value="1"/>
</dbReference>
<dbReference type="FunFam" id="1.20.58.530:FF:000005">
    <property type="entry name" value="unconventional myosin-IXa isoform X1"/>
    <property type="match status" value="1"/>
</dbReference>
<dbReference type="FunFam" id="1.25.40.530:FF:000008">
    <property type="entry name" value="unconventional myosin-XV"/>
    <property type="match status" value="1"/>
</dbReference>
<dbReference type="FunFam" id="2.30.29.30:FF:000469">
    <property type="entry name" value="unconventional myosin-XV"/>
    <property type="match status" value="1"/>
</dbReference>
<dbReference type="Gene3D" id="1.10.10.820">
    <property type="match status" value="1"/>
</dbReference>
<dbReference type="Gene3D" id="1.20.5.190">
    <property type="match status" value="1"/>
</dbReference>
<dbReference type="Gene3D" id="1.20.58.530">
    <property type="match status" value="1"/>
</dbReference>
<dbReference type="Gene3D" id="6.20.240.20">
    <property type="match status" value="1"/>
</dbReference>
<dbReference type="Gene3D" id="3.40.850.10">
    <property type="entry name" value="Kinesin motor domain"/>
    <property type="match status" value="1"/>
</dbReference>
<dbReference type="Gene3D" id="1.20.120.720">
    <property type="entry name" value="Myosin VI head, motor domain, U50 subdomain"/>
    <property type="match status" value="1"/>
</dbReference>
<dbReference type="Gene3D" id="1.25.40.530">
    <property type="entry name" value="MyTH4 domain"/>
    <property type="match status" value="2"/>
</dbReference>
<dbReference type="Gene3D" id="2.30.29.30">
    <property type="entry name" value="Pleckstrin-homology domain (PH domain)/Phosphotyrosine-binding domain (PTB)"/>
    <property type="match status" value="2"/>
</dbReference>
<dbReference type="Gene3D" id="2.30.30.40">
    <property type="entry name" value="SH3 Domains"/>
    <property type="match status" value="1"/>
</dbReference>
<dbReference type="InterPro" id="IPR035963">
    <property type="entry name" value="FERM_2"/>
</dbReference>
<dbReference type="InterPro" id="IPR019748">
    <property type="entry name" value="FERM_central"/>
</dbReference>
<dbReference type="InterPro" id="IPR000299">
    <property type="entry name" value="FERM_domain"/>
</dbReference>
<dbReference type="InterPro" id="IPR000048">
    <property type="entry name" value="IQ_motif_EF-hand-BS"/>
</dbReference>
<dbReference type="InterPro" id="IPR036961">
    <property type="entry name" value="Kinesin_motor_dom_sf"/>
</dbReference>
<dbReference type="InterPro" id="IPR001609">
    <property type="entry name" value="Myosin_head_motor_dom-like"/>
</dbReference>
<dbReference type="InterPro" id="IPR041795">
    <property type="entry name" value="MyoXV_FERM_C"/>
</dbReference>
<dbReference type="InterPro" id="IPR036057">
    <property type="entry name" value="MYSc_Myo15"/>
</dbReference>
<dbReference type="InterPro" id="IPR000857">
    <property type="entry name" value="MyTH4_dom"/>
</dbReference>
<dbReference type="InterPro" id="IPR038185">
    <property type="entry name" value="MyTH4_dom_sf"/>
</dbReference>
<dbReference type="InterPro" id="IPR027417">
    <property type="entry name" value="P-loop_NTPase"/>
</dbReference>
<dbReference type="InterPro" id="IPR011993">
    <property type="entry name" value="PH-like_dom_sf"/>
</dbReference>
<dbReference type="InterPro" id="IPR036028">
    <property type="entry name" value="SH3-like_dom_sf"/>
</dbReference>
<dbReference type="InterPro" id="IPR001452">
    <property type="entry name" value="SH3_domain"/>
</dbReference>
<dbReference type="InterPro" id="IPR051567">
    <property type="entry name" value="Unconventional_Myosin_ATPase"/>
</dbReference>
<dbReference type="PANTHER" id="PTHR22692">
    <property type="entry name" value="MYOSIN VII, XV"/>
    <property type="match status" value="1"/>
</dbReference>
<dbReference type="PANTHER" id="PTHR22692:SF21">
    <property type="entry name" value="MYOSIN XVA"/>
    <property type="match status" value="1"/>
</dbReference>
<dbReference type="Pfam" id="PF00373">
    <property type="entry name" value="FERM_M"/>
    <property type="match status" value="1"/>
</dbReference>
<dbReference type="Pfam" id="PF00612">
    <property type="entry name" value="IQ"/>
    <property type="match status" value="2"/>
</dbReference>
<dbReference type="Pfam" id="PF00063">
    <property type="entry name" value="Myosin_head"/>
    <property type="match status" value="1"/>
</dbReference>
<dbReference type="Pfam" id="PF00784">
    <property type="entry name" value="MyTH4"/>
    <property type="match status" value="2"/>
</dbReference>
<dbReference type="Pfam" id="PF07653">
    <property type="entry name" value="SH3_2"/>
    <property type="match status" value="1"/>
</dbReference>
<dbReference type="PRINTS" id="PR00193">
    <property type="entry name" value="MYOSINHEAVY"/>
</dbReference>
<dbReference type="SMART" id="SM00015">
    <property type="entry name" value="IQ"/>
    <property type="match status" value="3"/>
</dbReference>
<dbReference type="SMART" id="SM00242">
    <property type="entry name" value="MYSc"/>
    <property type="match status" value="1"/>
</dbReference>
<dbReference type="SMART" id="SM00139">
    <property type="entry name" value="MyTH4"/>
    <property type="match status" value="2"/>
</dbReference>
<dbReference type="SMART" id="SM00326">
    <property type="entry name" value="SH3"/>
    <property type="match status" value="1"/>
</dbReference>
<dbReference type="SUPFAM" id="SSF52540">
    <property type="entry name" value="P-loop containing nucleoside triphosphate hydrolases"/>
    <property type="match status" value="1"/>
</dbReference>
<dbReference type="SUPFAM" id="SSF47031">
    <property type="entry name" value="Second domain of FERM"/>
    <property type="match status" value="1"/>
</dbReference>
<dbReference type="SUPFAM" id="SSF50044">
    <property type="entry name" value="SH3-domain"/>
    <property type="match status" value="1"/>
</dbReference>
<dbReference type="PROSITE" id="PS50057">
    <property type="entry name" value="FERM_3"/>
    <property type="match status" value="1"/>
</dbReference>
<dbReference type="PROSITE" id="PS50096">
    <property type="entry name" value="IQ"/>
    <property type="match status" value="2"/>
</dbReference>
<dbReference type="PROSITE" id="PS51456">
    <property type="entry name" value="MYOSIN_MOTOR"/>
    <property type="match status" value="1"/>
</dbReference>
<dbReference type="PROSITE" id="PS51016">
    <property type="entry name" value="MYTH4"/>
    <property type="match status" value="2"/>
</dbReference>
<dbReference type="PROSITE" id="PS50002">
    <property type="entry name" value="SH3"/>
    <property type="match status" value="1"/>
</dbReference>
<reference key="1">
    <citation type="journal article" date="1999" name="Genomics">
        <title>Characterization of the human and mouse unconventional myosin XV genes responsible for hereditary deafness DFNB3 and shaker 2.</title>
        <authorList>
            <person name="Liang Y."/>
            <person name="Wang A."/>
            <person name="Belyantseva I.A."/>
            <person name="Anderson D.W."/>
            <person name="Probst F.J."/>
            <person name="Barber T.D."/>
            <person name="Miller W."/>
            <person name="Touchman J.W."/>
            <person name="Jin L."/>
            <person name="Sullivan S.L."/>
            <person name="Sellers J.R."/>
            <person name="Camper S.A."/>
            <person name="Lloyd R.V."/>
            <person name="Kachar B."/>
            <person name="Friedman T.B."/>
            <person name="Fridell R.A."/>
        </authorList>
    </citation>
    <scope>NUCLEOTIDE SEQUENCE [MRNA] (ISOFORM 1)</scope>
    <scope>TISSUE SPECIFICITY</scope>
</reference>
<reference key="2">
    <citation type="journal article" date="2003" name="Proc. Natl. Acad. Sci. U.S.A.">
        <title>Myosin XVa localizes to the tips of inner ear sensory cell stereocilia and is essential for staircase formation of the hair bundle.</title>
        <authorList>
            <person name="Belyantseva I.A."/>
            <person name="Boger E.T."/>
            <person name="Friedman T.B."/>
        </authorList>
    </citation>
    <scope>NUCLEOTIDE SEQUENCE [MRNA] (ISOFORMS 2 AND 3)</scope>
    <scope>FUNCTION</scope>
    <scope>SUBCELLULAR LOCATION</scope>
</reference>
<reference key="3">
    <citation type="journal article" date="2009" name="PLoS Biol.">
        <title>Lineage-specific biology revealed by a finished genome assembly of the mouse.</title>
        <authorList>
            <person name="Church D.M."/>
            <person name="Goodstadt L."/>
            <person name="Hillier L.W."/>
            <person name="Zody M.C."/>
            <person name="Goldstein S."/>
            <person name="She X."/>
            <person name="Bult C.J."/>
            <person name="Agarwala R."/>
            <person name="Cherry J.L."/>
            <person name="DiCuccio M."/>
            <person name="Hlavina W."/>
            <person name="Kapustin Y."/>
            <person name="Meric P."/>
            <person name="Maglott D."/>
            <person name="Birtle Z."/>
            <person name="Marques A.C."/>
            <person name="Graves T."/>
            <person name="Zhou S."/>
            <person name="Teague B."/>
            <person name="Potamousis K."/>
            <person name="Churas C."/>
            <person name="Place M."/>
            <person name="Herschleb J."/>
            <person name="Runnheim R."/>
            <person name="Forrest D."/>
            <person name="Amos-Landgraf J."/>
            <person name="Schwartz D.C."/>
            <person name="Cheng Z."/>
            <person name="Lindblad-Toh K."/>
            <person name="Eichler E.E."/>
            <person name="Ponting C.P."/>
        </authorList>
    </citation>
    <scope>NUCLEOTIDE SEQUENCE [LARGE SCALE GENOMIC DNA]</scope>
    <source>
        <strain>C57BL/6J</strain>
    </source>
</reference>
<reference key="4">
    <citation type="journal article" date="1998" name="Science">
        <title>Correction of deafness in shaker-2 mice by an unconventional myosin in a BAC transgene.</title>
        <authorList>
            <person name="Probst F.J."/>
            <person name="Fridell R.A."/>
            <person name="Raphael Y."/>
            <person name="Saunders T.L."/>
            <person name="Wang A."/>
            <person name="Liang Y."/>
            <person name="Morell R.J."/>
            <person name="Touchman J.W."/>
            <person name="Lyons R.H."/>
            <person name="Noben-Trauth K."/>
            <person name="Friedman T.B."/>
            <person name="Camper S.A."/>
        </authorList>
    </citation>
    <scope>NUCLEOTIDE SEQUENCE [MRNA] OF 1168-2970 (ISOFORM 1)</scope>
    <scope>VARIANT SH-2 TYR-1779</scope>
    <source>
        <tissue>Embryo</tissue>
    </source>
</reference>
<reference key="5">
    <citation type="journal article" date="1998" name="Biochem. Biophys. Res. Commun.">
        <title>A novel type of myosin encoded by the mouse deafness gene shaker-2.</title>
        <authorList>
            <person name="Wakabayashi Y."/>
            <person name="Takahashi Y."/>
            <person name="Kikkawa Y."/>
            <person name="Okano H."/>
            <person name="Mishima Y."/>
            <person name="Ushiki T."/>
            <person name="Yonekawa H."/>
            <person name="Kominami R."/>
        </authorList>
    </citation>
    <scope>NUCLEOTIDE SEQUENCE [MRNA] OF 1237-1823</scope>
    <scope>VARIANT SH-2 TYR-1779</scope>
    <source>
        <strain>C57BL/6J</strain>
    </source>
</reference>
<reference key="6">
    <citation type="journal article" date="2005" name="Nat. Cell Biol.">
        <title>Myosin-XVa is required for tip localization of whirlin and differential elongation of hair-cell stereocilia.</title>
        <authorList>
            <person name="Belyantseva I.A."/>
            <person name="Boger E.T."/>
            <person name="Naz S."/>
            <person name="Frolenkov G.I."/>
            <person name="Sellers J.R."/>
            <person name="Ahmed Z.M."/>
            <person name="Griffith A.J."/>
            <person name="Friedman T.B."/>
        </authorList>
    </citation>
    <scope>FUNCTION</scope>
    <scope>INTERACTION WITH WHRN</scope>
</reference>
<reference key="7">
    <citation type="journal article" date="2011" name="Curr. Biol.">
        <title>Regulation of stereocilia length by myosin XVa and whirlin depends on the actin-regulatory protein Eps8.</title>
        <authorList>
            <person name="Manor U."/>
            <person name="Disanza A."/>
            <person name="Grati M."/>
            <person name="Andrade L."/>
            <person name="Lin H."/>
            <person name="Di Fiore P.P."/>
            <person name="Scita G."/>
            <person name="Kachar B."/>
        </authorList>
    </citation>
    <scope>INTERACTION WITH EPS8</scope>
</reference>
<gene>
    <name type="primary">Myo15a</name>
    <name type="synonym">Myo15</name>
</gene>
<evidence type="ECO:0000250" key="1"/>
<evidence type="ECO:0000255" key="2"/>
<evidence type="ECO:0000255" key="3">
    <source>
        <dbReference type="PROSITE-ProRule" id="PRU00084"/>
    </source>
</evidence>
<evidence type="ECO:0000255" key="4">
    <source>
        <dbReference type="PROSITE-ProRule" id="PRU00116"/>
    </source>
</evidence>
<evidence type="ECO:0000255" key="5">
    <source>
        <dbReference type="PROSITE-ProRule" id="PRU00192"/>
    </source>
</evidence>
<evidence type="ECO:0000255" key="6">
    <source>
        <dbReference type="PROSITE-ProRule" id="PRU00359"/>
    </source>
</evidence>
<evidence type="ECO:0000255" key="7">
    <source>
        <dbReference type="PROSITE-ProRule" id="PRU00782"/>
    </source>
</evidence>
<evidence type="ECO:0000256" key="8">
    <source>
        <dbReference type="SAM" id="MobiDB-lite"/>
    </source>
</evidence>
<evidence type="ECO:0000269" key="9">
    <source>
    </source>
</evidence>
<evidence type="ECO:0000269" key="10">
    <source>
    </source>
</evidence>
<evidence type="ECO:0000269" key="11">
    <source>
    </source>
</evidence>
<evidence type="ECO:0000269" key="12">
    <source>
    </source>
</evidence>
<evidence type="ECO:0000269" key="13">
    <source>
    </source>
</evidence>
<evidence type="ECO:0000269" key="14">
    <source>
    </source>
</evidence>
<evidence type="ECO:0000303" key="15">
    <source>
    </source>
</evidence>
<evidence type="ECO:0000305" key="16"/>
<evidence type="ECO:0007829" key="17">
    <source>
        <dbReference type="PDB" id="6Y38"/>
    </source>
</evidence>
<evidence type="ECO:0007829" key="18">
    <source>
        <dbReference type="PDB" id="7R91"/>
    </source>
</evidence>
<evidence type="ECO:0007829" key="19">
    <source>
        <dbReference type="PDB" id="7UDT"/>
    </source>
</evidence>
<feature type="chain" id="PRO_0000123475" description="Unconventional myosin-XV">
    <location>
        <begin position="1"/>
        <end position="3511"/>
    </location>
</feature>
<feature type="domain" description="Myosin motor" evidence="7">
    <location>
        <begin position="1206"/>
        <end position="1883"/>
    </location>
</feature>
<feature type="domain" description="IQ 1" evidence="4">
    <location>
        <begin position="1886"/>
        <end position="1908"/>
    </location>
</feature>
<feature type="domain" description="IQ 2" evidence="4">
    <location>
        <begin position="1909"/>
        <end position="1938"/>
    </location>
</feature>
<feature type="domain" description="MyTH4 1" evidence="6">
    <location>
        <begin position="2049"/>
        <end position="2195"/>
    </location>
</feature>
<feature type="domain" description="SH3" evidence="5">
    <location>
        <begin position="2848"/>
        <end position="2934"/>
    </location>
</feature>
<feature type="domain" description="MyTH4 2" evidence="6">
    <location>
        <begin position="3031"/>
        <end position="3185"/>
    </location>
</feature>
<feature type="domain" description="FERM" evidence="3">
    <location>
        <begin position="3190"/>
        <end position="3511"/>
    </location>
</feature>
<feature type="region of interest" description="Disordered" evidence="8">
    <location>
        <begin position="1"/>
        <end position="44"/>
    </location>
</feature>
<feature type="region of interest" description="Disordered" evidence="8">
    <location>
        <begin position="574"/>
        <end position="690"/>
    </location>
</feature>
<feature type="region of interest" description="Disordered" evidence="8">
    <location>
        <begin position="712"/>
        <end position="1030"/>
    </location>
</feature>
<feature type="region of interest" description="Disordered" evidence="8">
    <location>
        <begin position="1105"/>
        <end position="1135"/>
    </location>
</feature>
<feature type="region of interest" description="Actin-binding" evidence="2">
    <location>
        <begin position="1776"/>
        <end position="1783"/>
    </location>
</feature>
<feature type="region of interest" description="Neck or regulatory domain">
    <location>
        <begin position="1872"/>
        <end position="2013"/>
    </location>
</feature>
<feature type="region of interest" description="Tail">
    <location>
        <begin position="2014"/>
        <end position="3511"/>
    </location>
</feature>
<feature type="region of interest" description="Disordered" evidence="8">
    <location>
        <begin position="2330"/>
        <end position="2359"/>
    </location>
</feature>
<feature type="region of interest" description="Disordered" evidence="8">
    <location>
        <begin position="2392"/>
        <end position="2425"/>
    </location>
</feature>
<feature type="region of interest" description="Disordered" evidence="8">
    <location>
        <begin position="2460"/>
        <end position="2509"/>
    </location>
</feature>
<feature type="region of interest" description="Disordered" evidence="8">
    <location>
        <begin position="2565"/>
        <end position="2584"/>
    </location>
</feature>
<feature type="region of interest" description="Disordered" evidence="8">
    <location>
        <begin position="2629"/>
        <end position="2648"/>
    </location>
</feature>
<feature type="region of interest" description="Disordered" evidence="8">
    <location>
        <begin position="2964"/>
        <end position="2984"/>
    </location>
</feature>
<feature type="coiled-coil region" evidence="2">
    <location>
        <begin position="1307"/>
        <end position="1334"/>
    </location>
</feature>
<feature type="compositionally biased region" description="Polar residues" evidence="8">
    <location>
        <begin position="622"/>
        <end position="634"/>
    </location>
</feature>
<feature type="compositionally biased region" description="Pro residues" evidence="8">
    <location>
        <begin position="654"/>
        <end position="672"/>
    </location>
</feature>
<feature type="compositionally biased region" description="Low complexity" evidence="8">
    <location>
        <begin position="769"/>
        <end position="792"/>
    </location>
</feature>
<feature type="compositionally biased region" description="Pro residues" evidence="8">
    <location>
        <begin position="797"/>
        <end position="807"/>
    </location>
</feature>
<feature type="compositionally biased region" description="Polar residues" evidence="8">
    <location>
        <begin position="2337"/>
        <end position="2351"/>
    </location>
</feature>
<feature type="compositionally biased region" description="Gly residues" evidence="8">
    <location>
        <begin position="2395"/>
        <end position="2406"/>
    </location>
</feature>
<feature type="compositionally biased region" description="Basic and acidic residues" evidence="8">
    <location>
        <begin position="2410"/>
        <end position="2420"/>
    </location>
</feature>
<feature type="compositionally biased region" description="Basic and acidic residues" evidence="8">
    <location>
        <begin position="2573"/>
        <end position="2584"/>
    </location>
</feature>
<feature type="compositionally biased region" description="Basic and acidic residues" evidence="8">
    <location>
        <begin position="2965"/>
        <end position="2980"/>
    </location>
</feature>
<feature type="binding site" evidence="2">
    <location>
        <begin position="1299"/>
        <end position="1306"/>
    </location>
    <ligand>
        <name>ATP</name>
        <dbReference type="ChEBI" id="CHEBI:30616"/>
    </ligand>
</feature>
<feature type="splice variant" id="VSP_029944" description="In isoform 3." evidence="15">
    <location>
        <begin position="1"/>
        <end position="1187"/>
    </location>
</feature>
<feature type="splice variant" id="VSP_029945" description="In isoform 2 and isoform 3." evidence="15">
    <location>
        <begin position="1955"/>
        <end position="1972"/>
    </location>
</feature>
<feature type="sequence variant" description="In sh-2." evidence="13 14">
    <original>C</original>
    <variation>Y</variation>
    <location>
        <position position="1779"/>
    </location>
</feature>
<feature type="sequence conflict" description="In Ref. 1; AAF05904 and 2; AAP88402." evidence="16" ref="1 2">
    <original>R</original>
    <variation>C</variation>
    <location>
        <position position="1141"/>
    </location>
</feature>
<feature type="sequence conflict" description="In Ref. 4; AAC40124." evidence="16" ref="4">
    <location>
        <begin position="1330"/>
        <end position="1331"/>
    </location>
</feature>
<feature type="sequence conflict" description="In Ref. 5; BAA36582." evidence="16" ref="5">
    <original>L</original>
    <variation>R</variation>
    <location>
        <position position="1579"/>
    </location>
</feature>
<feature type="sequence conflict" description="In Ref. 4; AAC40124." evidence="16" ref="4">
    <original>L</original>
    <variation>M</variation>
    <location>
        <position position="2077"/>
    </location>
</feature>
<feature type="sequence conflict" description="In Ref. 4; AAC40124." evidence="16" ref="4">
    <original>L</original>
    <variation>P</variation>
    <location>
        <position position="2139"/>
    </location>
</feature>
<feature type="sequence conflict" description="In Ref. 1; AAF05904 and 2; AAP88402/AAP88403." evidence="16" ref="1 2">
    <original>A</original>
    <variation>V</variation>
    <location>
        <position position="2953"/>
    </location>
</feature>
<feature type="sequence conflict" description="In Ref. 1; AAF05904 and 2; AAP88402/AAP88403." evidence="16" ref="1 2">
    <original>F</original>
    <variation>S</variation>
    <location>
        <position position="3195"/>
    </location>
</feature>
<feature type="sequence conflict" description="In Ref. 1; AAF05904 and 2; AAP88402/AAP88403." evidence="16" ref="1 2">
    <original>Q</original>
    <variation>K</variation>
    <location>
        <position position="3449"/>
    </location>
</feature>
<feature type="helix" evidence="18">
    <location>
        <begin position="1211"/>
        <end position="1213"/>
    </location>
</feature>
<feature type="helix" evidence="18">
    <location>
        <begin position="1219"/>
        <end position="1231"/>
    </location>
</feature>
<feature type="strand" evidence="18">
    <location>
        <begin position="1237"/>
        <end position="1239"/>
    </location>
</feature>
<feature type="strand" evidence="18">
    <location>
        <begin position="1242"/>
        <end position="1246"/>
    </location>
</feature>
<feature type="helix" evidence="18">
    <location>
        <begin position="1257"/>
        <end position="1262"/>
    </location>
</feature>
<feature type="helix" evidence="18">
    <location>
        <begin position="1275"/>
        <end position="1289"/>
    </location>
</feature>
<feature type="strand" evidence="18">
    <location>
        <begin position="1293"/>
        <end position="1299"/>
    </location>
</feature>
<feature type="helix" evidence="18">
    <location>
        <begin position="1305"/>
        <end position="1319"/>
    </location>
</feature>
<feature type="helix" evidence="18">
    <location>
        <begin position="1326"/>
        <end position="1332"/>
    </location>
</feature>
<feature type="helix" evidence="18">
    <location>
        <begin position="1335"/>
        <end position="1342"/>
    </location>
</feature>
<feature type="strand" evidence="18">
    <location>
        <begin position="1350"/>
        <end position="1353"/>
    </location>
</feature>
<feature type="strand" evidence="18">
    <location>
        <begin position="1355"/>
        <end position="1364"/>
    </location>
</feature>
<feature type="strand" evidence="18">
    <location>
        <begin position="1367"/>
        <end position="1377"/>
    </location>
</feature>
<feature type="turn" evidence="18">
    <location>
        <begin position="1381"/>
        <end position="1384"/>
    </location>
</feature>
<feature type="helix" evidence="18">
    <location>
        <begin position="1394"/>
        <end position="1402"/>
    </location>
</feature>
<feature type="helix" evidence="18">
    <location>
        <begin position="1405"/>
        <end position="1411"/>
    </location>
</feature>
<feature type="turn" evidence="18">
    <location>
        <begin position="1416"/>
        <end position="1418"/>
    </location>
</feature>
<feature type="turn" evidence="18">
    <location>
        <begin position="1420"/>
        <end position="1424"/>
    </location>
</feature>
<feature type="helix" evidence="18">
    <location>
        <begin position="1435"/>
        <end position="1448"/>
    </location>
</feature>
<feature type="helix" evidence="18">
    <location>
        <begin position="1453"/>
        <end position="1469"/>
    </location>
</feature>
<feature type="strand" evidence="18">
    <location>
        <begin position="1474"/>
        <end position="1478"/>
    </location>
</feature>
<feature type="strand" evidence="18">
    <location>
        <begin position="1480"/>
        <end position="1488"/>
    </location>
</feature>
<feature type="helix" evidence="18">
    <location>
        <begin position="1491"/>
        <end position="1500"/>
    </location>
</feature>
<feature type="helix" evidence="18">
    <location>
        <begin position="1504"/>
        <end position="1512"/>
    </location>
</feature>
<feature type="strand" evidence="18">
    <location>
        <begin position="1513"/>
        <end position="1517"/>
    </location>
</feature>
<feature type="strand" evidence="18">
    <location>
        <begin position="1522"/>
        <end position="1526"/>
    </location>
</feature>
<feature type="helix" evidence="18">
    <location>
        <begin position="1529"/>
        <end position="1558"/>
    </location>
</feature>
<feature type="strand" evidence="18">
    <location>
        <begin position="1565"/>
        <end position="1572"/>
    </location>
</feature>
<feature type="helix" evidence="18">
    <location>
        <begin position="1584"/>
        <end position="1614"/>
    </location>
</feature>
<feature type="strand" evidence="18">
    <location>
        <begin position="1615"/>
        <end position="1617"/>
    </location>
</feature>
<feature type="helix" evidence="18">
    <location>
        <begin position="1628"/>
        <end position="1635"/>
    </location>
</feature>
<feature type="turn" evidence="18">
    <location>
        <begin position="1637"/>
        <end position="1639"/>
    </location>
</feature>
<feature type="helix" evidence="18">
    <location>
        <begin position="1641"/>
        <end position="1648"/>
    </location>
</feature>
<feature type="helix" evidence="18">
    <location>
        <begin position="1656"/>
        <end position="1667"/>
    </location>
</feature>
<feature type="strand" evidence="18">
    <location>
        <begin position="1671"/>
        <end position="1674"/>
    </location>
</feature>
<feature type="strand" evidence="18">
    <location>
        <begin position="1681"/>
        <end position="1687"/>
    </location>
</feature>
<feature type="strand" evidence="18">
    <location>
        <begin position="1690"/>
        <end position="1695"/>
    </location>
</feature>
<feature type="turn" evidence="18">
    <location>
        <begin position="1699"/>
        <end position="1703"/>
    </location>
</feature>
<feature type="helix" evidence="18">
    <location>
        <begin position="1709"/>
        <end position="1716"/>
    </location>
</feature>
<feature type="helix" evidence="18">
    <location>
        <begin position="1721"/>
        <end position="1733"/>
    </location>
</feature>
<feature type="helix" evidence="18">
    <location>
        <begin position="1754"/>
        <end position="1767"/>
    </location>
</feature>
<feature type="strand" evidence="18">
    <location>
        <begin position="1770"/>
        <end position="1772"/>
    </location>
</feature>
<feature type="strand" evidence="18">
    <location>
        <begin position="1775"/>
        <end position="1780"/>
    </location>
</feature>
<feature type="helix" evidence="18">
    <location>
        <begin position="1793"/>
        <end position="1802"/>
    </location>
</feature>
<feature type="turn" evidence="18">
    <location>
        <begin position="1803"/>
        <end position="1805"/>
    </location>
</feature>
<feature type="helix" evidence="18">
    <location>
        <begin position="1806"/>
        <end position="1812"/>
    </location>
</feature>
<feature type="helix" evidence="18">
    <location>
        <begin position="1822"/>
        <end position="1828"/>
    </location>
</feature>
<feature type="helix" evidence="18">
    <location>
        <begin position="1829"/>
        <end position="1831"/>
    </location>
</feature>
<feature type="helix" evidence="18">
    <location>
        <begin position="1844"/>
        <end position="1852"/>
    </location>
</feature>
<feature type="helix" evidence="18">
    <location>
        <begin position="1858"/>
        <end position="1860"/>
    </location>
</feature>
<feature type="strand" evidence="18">
    <location>
        <begin position="1865"/>
        <end position="1867"/>
    </location>
</feature>
<feature type="helix" evidence="18">
    <location>
        <begin position="1874"/>
        <end position="1888"/>
    </location>
</feature>
<feature type="turn" evidence="19">
    <location>
        <begin position="1910"/>
        <end position="1913"/>
    </location>
</feature>
<feature type="helix" evidence="19">
    <location>
        <begin position="1914"/>
        <end position="1921"/>
    </location>
</feature>
<feature type="strand" evidence="17">
    <location>
        <begin position="3508"/>
        <end position="3511"/>
    </location>
</feature>
<comment type="function">
    <text evidence="1 10 11">Myosins are actin-based motor molecules with ATPase activity. Unconventional myosins serve in intracellular movements. Their highly divergent tails are presumed to bind to membranous compartments, which would be moved relative to actin filaments (By similarity). Required for the arrangement of stereocilia in mature hair bundles.</text>
</comment>
<comment type="subunit">
    <text evidence="1 11 12">Interacts with the third PDZ domain of WHRN which is necessary for localization of WHRN to stereocilium tips. Interacts with FASLG (By similarity). Interacts with EPS8.</text>
</comment>
<comment type="interaction">
    <interactant intactId="EBI-4281382">
        <id>Q9QZZ4</id>
    </interactant>
    <interactant intactId="EBI-7417603">
        <id>Q80VW5</id>
        <label>Whrn</label>
    </interactant>
    <organismsDiffer>false</organismsDiffer>
    <experiments>5</experiments>
</comment>
<comment type="subcellular location">
    <subcellularLocation>
        <location evidence="10">Cell projection</location>
        <location evidence="10">Stereocilium</location>
    </subcellularLocation>
    <subcellularLocation>
        <location evidence="10">Cytoplasm</location>
        <location evidence="10">Cytoskeleton</location>
    </subcellularLocation>
    <text>Localizes to stereocilium tips in cochlear and vestibular hair cells.</text>
</comment>
<comment type="alternative products">
    <event type="alternative splicing"/>
    <isoform>
        <id>Q9QZZ4-1</id>
        <name>1</name>
        <sequence type="displayed"/>
    </isoform>
    <isoform>
        <id>Q9QZZ4-2</id>
        <name>2</name>
        <name>1a</name>
        <sequence type="described" ref="VSP_029945"/>
    </isoform>
    <isoform>
        <id>Q9QZZ4-3</id>
        <name>3</name>
        <name>2a</name>
        <sequence type="described" ref="VSP_029944 VSP_029945"/>
    </isoform>
</comment>
<comment type="tissue specificity">
    <text evidence="9">In the developing inner ear, expressed in cochlea and vestibular apparatus. Expression appears to be restricted to cochlear neurosensory cells and upper epithelial layer of macula saccula. Also expressed in macula utriculi and cristae ampullaris of the semicircular canals. In adult cochlear hair cells, highest expression in stereocilia and apical body.</text>
</comment>
<comment type="disease">
    <text>Defects in Myo15a are the cause of shaker-2 (sh-2), a condition causing deafness, circling behavior, head tossing and hyperactivity. Auditory hair cells of affected animals have very short stereocilia and a long actin-containing protrusion at their basal end.</text>
</comment>
<comment type="similarity">
    <text evidence="16">Belongs to the TRAFAC class myosin-kinesin ATPase superfamily. Myosin family.</text>
</comment>
<comment type="caution">
    <text evidence="16">Represents an unconventional myosin. This protein should not be confused with the conventional myosin-15 (MYH15).</text>
</comment>
<sequence length="3511" mass="395622">MADEEKKAKKGKKGKKAPEPEKPKRSLKGTSRLFMGFRDRTPKISKKGQFRSASAFFWGLHTGPQKTKRKKKARTVLKSTSKLMTQMRVGKKKRAMKGKKPSFMVIRFPGRRGYGRLRPRAQSLSKASTAINWLTKKFLLKKAEESGSEQATVDAWLQRSSSRVGSRKLPFPSGAEILRHGGRLRRFPRSHSIYSSGEPVGFLPFEDEAPFRHAGSRKSLYGLEGFQDLGEYYDYHREGDDYYDQQSLYHYEEQEPYLAEFGGYSPAWPPYDDYGYPPGDPYNYYHPDYYGDTLYPGYAYGYGYGYDDFEPPYAPPSGYSSPYSYHDSFESEAYPYSYYLDPYATHHMPYPPYDFPYDTPYDIPYFDPYGVPYAEGVYGGGAEAIYPPGMPYVYPEEPAFMYPWVPPPIMSPHNPYAHPMDDIAELEEPEETGEERQSTSFRLPSAAFFEQQGMDKPARSKLSLIRKFRLFPRPQVKLFGKEKLEVPLPPSLDIPLPLGDAEGEEEEEEMPPVPTMPYTHPYWSFLTPRQRNLQRALSAFGARQGLGFGPEFGHPTPRPATSLARFLKKTLSEKKPIPRLRGSQKARGGRPPVREAAYKRFGYKLAGMDPDRPNTPIVLRRSQPQARNNNNSHGPPSPRPAPRALTHWSALISPPMPAPSPSPASPLTPPFSPTFSRPPRLASPYGSLRQHPPPWAAPAHVPFPPQANWWGFAEPPGTSPEVAPDLLAFPVPRPSFRASRSRSRRAAYGFPSPSLIGSRRRPHLPSPQPSLRSLPGQGYHSPLGPLSPQLSLRRGPFQPPFPPPPRRPQSLREAFSLRRASGRLGPPRSPVLGSPRPPSPPPLLKHGPRHRSLNLPSRLPRTWRRLSEPPTRAVKPWVHRAYPPPPSAGPWGASTGALEQQENQREAEDSETPWTVPPLAPSWDVDMPPTQRPPSPWPEGIGSLRGFSRPPPVPENPLLEHTSPSCEPQSEDRVSNLTGIFLGQHHDPGPGQLTKSADPSLEKPEEVVTLGDPQPPAEPEALNPTPPNKNVVSERKVLRLSASYPLVTCKQARATWPQWHRWKTVSRTPAPLAPTRAPGPLLKAGEQPRAEPGRFAVVMPQVRGVSSFRPKGPAPVQPPEHPDQDPEQGPAPQACSLRWPRLWPPTDAHCLWSRIRTYSSQSHLRGHGGDCHKSLWKKTRPQSWQNKMHSIRNLPSMRSREQHREDGVEDMTQLEDLQETTVLANLKTRFERNLIYTYIGSILVSVNPYRMFAIYGPEQVQQYSGRALGENPPHLFAIANLAFAKMLDAKQNQCVIISGESGSGKTEATKLILRCLAAMNQRRDVMQQIKILEATPLLEAFGNAKTVRNDNSSRFGKFVEIFLEGGVICGAITSQYLLEKSRIVFQAKNERNYHIFYELLAGLPAQLRQAFSLQEAETYYYLNQGGNCEIAGKSDADDFRRLLAAMEVLGFTSEDQDSIFRILASILHLGNVYFEKHETDAQEVASVVSAREIQAVAELLQVSPEGLQKAITFKVTETIREKIFTPLTVESAVDARDAIAKVLYALLFGWLITRVNALVSPKQDTLSIAILDIYGFEDLSFNSFEQLCINYANENLQYLFNKIVFQEEQEEYIREQMDWREIAFADNQPCINLISLKPYGILRILDDQCCFPQATDHTFLQKCHYHHGANPLYSKPKMPLPEFTIKHYAGKVTYQVHKFLDKNHDQVRQDVLDLFVHSRTRVVAHLFSSHAAQTAPPRLGKSSSITRLYKAHTVAAKFQQSLLDLVEKMERCNPLFVRCLKPNHKKEPGLFEPDVMMAQLRYSGVLETVRIRKEGFPVRLPFQVFIDRYRCLVALKLNVPADGDMCVSLLSRLCTVTPDMYRVGISKLFLKEHLHQLLESMRERVQNRAALTLQRYLRGFFIQRHFRSLRRKIILLQSRARGFLARQRYQQMRQSLLKFRSLVHTYVNRRRYLKLRAEQRRRAQEAWLREQEELSKREVVPVRHLEVPAEVAGLLQAAAGLKLSSGPRVAVVRAPRLQAEPCVTLPLDINNYPMAKFIRCHFKEPSFGMLTVPLKMPLTRLPVEHHAEAISVFKLILRFMGDPHLHGTQEMILGNYIVHQGLVEPALRDEILAQLANQVWRNPNAYNSKRGWLLLAACLSGFAPSPHLDKFLLKFVSDYGQNGFQAVCQHRLLQAMGSGAARTFPPTQLEWTAIQEKASMALDVSCFNGDQFSCPVHTWSTGEAVAGDILKHRGLADGWRGWTVAMKNGVQWAELAGHDYVLDLVSDLELLRDFPRQKSYFIVGAEGPLAGRGDTRGVFGNCWDSDEDTPTRPQPQDHVAKMPDLDGYCSHKEDGTNGETEAQRWTSNRQAVDSIGESTVPPRELDGYLDSLFDPVLACGDADLEKPTAIAYRMKGGGQPGGGGGSTSEDTSRRPPEPKLKPIPGLDASTLALQQAFIHRQAVLLAREMTLQALALQQQPLSATSRPQLPERPLAPEARPKTVVGTGPPAKPVLVRPTPQSWAPGSVAKAPKIPSKPVAVPILAQDWTAPESISASPELVRYSTLNSEHFPQPTQQIRSIIKQYKQPPWAGHPEARRTDGGKVFRRPPDPHEEALMILKGQKTQLAVVPGTQVSREAVAMVKPVTSAPRPCMGPTPVQPSRSLEPPEDPVQTQLHRLVNPNFYGYQDIPWRIFLRKEVFYPKDNYSHPVQLDLLFRQILHDTFSEACLRISEDERLQMKALFAQNQLDTQRPLVTESVKRAAISMARDSWEIYFSRLFPAMGSVGTGVQILAVSHTGIKLLQMVKGSKEASRRLRVLCAYSFADILFVTMPSQNMLEFNLSNEKLILFSARAQQVKTLVDTFILELKKDSDYVVAVRNFLSEDPELLSFHKGDIIHLQSLEPTRVGYSAGCVVRKKLVYLEELRRRGPDFGWRFGAVHGRVGRFPSELVQPAAAPDFLQLPAEPGRGRAAAVAAAVASAAAAQEVGRRREGPPVRARSADSGEDSIALPPSTMLEFAQKYFRDPRRRPRDGLKLKSKEDRESKTLEDVLCFTKVPIQESLIELSDSNLNKMAVDMFVAVMRFMGDAPLKGQSELDVLCTLLKLCGDHEVMRDECYCQIVKQITDNSSPKQDSCQRGWRLLYIMAAYYSCSEVFYPYLIRFLQHVSWTPGLPFQGIAKACEQNLQKTLRFGGRLEFPSNMELRAMLAGRSSKRQLFLLPGGLERHLKIKTCTVALDVIEGLCTEMALTRPEAFDEYVIFVVTNRGQHVCPLSCRAYILDVASEMEQVDGGYTLWFRRVLWDQPLKFENELYVTMHYNQVLPDYLKGLFSSVPARQPTEQQLQQVSKLASLQHRAKDHFYLPSVREVQEYIPAQLYHTTAGDTWLNLVSQHRQQTQALSPHQARAQFLGLLSAFPLFGSSFFFIQSCSNVLVPAPCILAVNHNGLNFLSTKTHELIVKIPLKEIQSTWTQQPTANSSYPYVEISLGDVAAQRTMQLQLEQGLELCRVVAVHVESMLSAREERLTLPPSEITLL</sequence>
<proteinExistence type="evidence at protein level"/>
<organism>
    <name type="scientific">Mus musculus</name>
    <name type="common">Mouse</name>
    <dbReference type="NCBI Taxonomy" id="10090"/>
    <lineage>
        <taxon>Eukaryota</taxon>
        <taxon>Metazoa</taxon>
        <taxon>Chordata</taxon>
        <taxon>Craniata</taxon>
        <taxon>Vertebrata</taxon>
        <taxon>Euteleostomi</taxon>
        <taxon>Mammalia</taxon>
        <taxon>Eutheria</taxon>
        <taxon>Euarchontoglires</taxon>
        <taxon>Glires</taxon>
        <taxon>Rodentia</taxon>
        <taxon>Myomorpha</taxon>
        <taxon>Muroidea</taxon>
        <taxon>Muridae</taxon>
        <taxon>Murinae</taxon>
        <taxon>Mus</taxon>
        <taxon>Mus</taxon>
    </lineage>
</organism>
<accession>Q9QZZ4</accession>
<accession>A2A637</accession>
<accession>A2A638</accession>
<accession>O70395</accession>
<accession>Q5SX93</accession>
<accession>Q7TMR5</accession>
<accession>Q7TMR6</accession>
<accession>Q9QWL6</accession>
<protein>
    <recommendedName>
        <fullName>Unconventional myosin-XV</fullName>
    </recommendedName>
    <alternativeName>
        <fullName>Unconventional myosin-15</fullName>
    </alternativeName>
</protein>